<reference key="1">
    <citation type="submission" date="2008-04" db="EMBL/GenBank/DDBJ databases">
        <title>Complete sequence of Yersinia pseudotuberculosis PB1/+.</title>
        <authorList>
            <person name="Copeland A."/>
            <person name="Lucas S."/>
            <person name="Lapidus A."/>
            <person name="Glavina del Rio T."/>
            <person name="Dalin E."/>
            <person name="Tice H."/>
            <person name="Bruce D."/>
            <person name="Goodwin L."/>
            <person name="Pitluck S."/>
            <person name="Munk A.C."/>
            <person name="Brettin T."/>
            <person name="Detter J.C."/>
            <person name="Han C."/>
            <person name="Tapia R."/>
            <person name="Schmutz J."/>
            <person name="Larimer F."/>
            <person name="Land M."/>
            <person name="Hauser L."/>
            <person name="Challacombe J.F."/>
            <person name="Green L."/>
            <person name="Lindler L.E."/>
            <person name="Nikolich M.P."/>
            <person name="Richardson P."/>
        </authorList>
    </citation>
    <scope>NUCLEOTIDE SEQUENCE [LARGE SCALE GENOMIC DNA]</scope>
    <source>
        <strain>PB1/+</strain>
    </source>
</reference>
<keyword id="KW-0963">Cytoplasm</keyword>
<gene>
    <name type="ordered locus">YPTS_1390</name>
</gene>
<proteinExistence type="inferred from homology"/>
<accession>B2K9F1</accession>
<evidence type="ECO:0000255" key="1">
    <source>
        <dbReference type="HAMAP-Rule" id="MF_00730"/>
    </source>
</evidence>
<name>NDPA_YERPB</name>
<sequence>MSLDIDQIALHQLIKRDEQTLDVVLRDSLLPTNAVVEEMMAELHRVYSAKSKAYGLFNEQSELADALKRSRKGDEDFLSFSRAATGRLRDELAKYPFAEGGVVLFCQYRYLAVEYLLISVLSSCHSMRVNEQLDLSTTHYLDINRADIVARIDLTEWETNPESTRYLTFLKGRVGRKVSDFFMDFLSAAEGLDTKAQNRGLLQAVDDYCADAELGKNERQAYRQQVYSYCNEQLRAGEEIALQVLAQELPKLGEKDFQQFSAEQGYALEESFPADRGTLRQLTKFAGSGGGLSINFDALLLDERIFWDAATDTLTIKGTPPNLRDQLQRRAGSK</sequence>
<comment type="subcellular location">
    <subcellularLocation>
        <location evidence="1">Cytoplasm</location>
        <location evidence="1">Nucleoid</location>
    </subcellularLocation>
</comment>
<comment type="similarity">
    <text evidence="1">Belongs to the YejK family.</text>
</comment>
<dbReference type="EMBL" id="CP001048">
    <property type="protein sequence ID" value="ACC88364.1"/>
    <property type="molecule type" value="Genomic_DNA"/>
</dbReference>
<dbReference type="SMR" id="B2K9F1"/>
<dbReference type="KEGG" id="ypb:YPTS_1390"/>
<dbReference type="PATRIC" id="fig|502801.10.peg.743"/>
<dbReference type="GO" id="GO:0043590">
    <property type="term" value="C:bacterial nucleoid"/>
    <property type="evidence" value="ECO:0007669"/>
    <property type="project" value="TreeGrafter"/>
</dbReference>
<dbReference type="GO" id="GO:0005737">
    <property type="term" value="C:cytoplasm"/>
    <property type="evidence" value="ECO:0007669"/>
    <property type="project" value="UniProtKB-UniRule"/>
</dbReference>
<dbReference type="GO" id="GO:0003690">
    <property type="term" value="F:double-stranded DNA binding"/>
    <property type="evidence" value="ECO:0007669"/>
    <property type="project" value="TreeGrafter"/>
</dbReference>
<dbReference type="GO" id="GO:0003727">
    <property type="term" value="F:single-stranded RNA binding"/>
    <property type="evidence" value="ECO:0007669"/>
    <property type="project" value="TreeGrafter"/>
</dbReference>
<dbReference type="HAMAP" id="MF_00730">
    <property type="entry name" value="NdpA"/>
    <property type="match status" value="1"/>
</dbReference>
<dbReference type="InterPro" id="IPR007358">
    <property type="entry name" value="Nucleoid_associated_NdpA"/>
</dbReference>
<dbReference type="NCBIfam" id="NF001557">
    <property type="entry name" value="PRK00378.1"/>
    <property type="match status" value="1"/>
</dbReference>
<dbReference type="PANTHER" id="PTHR38772">
    <property type="match status" value="1"/>
</dbReference>
<dbReference type="PANTHER" id="PTHR38772:SF1">
    <property type="entry name" value="NUCLEOID-ASSOCIATED PROTEIN YEJK"/>
    <property type="match status" value="1"/>
</dbReference>
<dbReference type="Pfam" id="PF04245">
    <property type="entry name" value="NA37"/>
    <property type="match status" value="1"/>
</dbReference>
<organism>
    <name type="scientific">Yersinia pseudotuberculosis serotype IB (strain PB1/+)</name>
    <dbReference type="NCBI Taxonomy" id="502801"/>
    <lineage>
        <taxon>Bacteria</taxon>
        <taxon>Pseudomonadati</taxon>
        <taxon>Pseudomonadota</taxon>
        <taxon>Gammaproteobacteria</taxon>
        <taxon>Enterobacterales</taxon>
        <taxon>Yersiniaceae</taxon>
        <taxon>Yersinia</taxon>
    </lineage>
</organism>
<protein>
    <recommendedName>
        <fullName evidence="1">Nucleoid-associated protein YPTS_1390</fullName>
    </recommendedName>
</protein>
<feature type="chain" id="PRO_1000132736" description="Nucleoid-associated protein YPTS_1390">
    <location>
        <begin position="1"/>
        <end position="334"/>
    </location>
</feature>